<accession>B0TH58</accession>
<sequence length="345" mass="37558">MDTMRWQDDHLLLLDQTKLPLTEEYIECWDHVILCDAIKKLKVRGAPAIGAAAAFGVALAALNYTGEDRAEFEADVKKAIADLGKTRPTAVNLFWALRRMEAVLEDIRTYSVKEQQERLIAEAKAVFDEDRAMNEQMGQYGLELIPESAGILTHCNAGALATAGFGTALGVIRAAHRAGKEISVFADETRPLLQGARLTAWELMQDGIPVTLITDSMAAYVMKQKLVDLVIVGADRITANGDVANKIGTYGVALAAKAHGIPFYVAAPVSTFDLSLESGLQIPIEERDTEEVRRVGDSITAPPGVPVYNPAFDVTPAELVTAFITDRGVFRPPYLETLRAMAETK</sequence>
<feature type="chain" id="PRO_0000357195" description="Methylthioribose-1-phosphate isomerase">
    <location>
        <begin position="1"/>
        <end position="345"/>
    </location>
</feature>
<feature type="active site" description="Proton donor" evidence="1">
    <location>
        <position position="235"/>
    </location>
</feature>
<feature type="binding site" evidence="1">
    <location>
        <begin position="44"/>
        <end position="46"/>
    </location>
    <ligand>
        <name>substrate</name>
    </ligand>
</feature>
<feature type="binding site" evidence="1">
    <location>
        <position position="87"/>
    </location>
    <ligand>
        <name>substrate</name>
    </ligand>
</feature>
<feature type="binding site" evidence="1">
    <location>
        <position position="194"/>
    </location>
    <ligand>
        <name>substrate</name>
    </ligand>
</feature>
<feature type="binding site" evidence="1">
    <location>
        <begin position="245"/>
        <end position="246"/>
    </location>
    <ligand>
        <name>substrate</name>
    </ligand>
</feature>
<feature type="site" description="Transition state stabilizer" evidence="1">
    <location>
        <position position="155"/>
    </location>
</feature>
<evidence type="ECO:0000255" key="1">
    <source>
        <dbReference type="HAMAP-Rule" id="MF_01678"/>
    </source>
</evidence>
<evidence type="ECO:0000305" key="2"/>
<gene>
    <name evidence="1" type="primary">mtnA</name>
    <name type="ordered locus">Helmi_21080</name>
    <name type="ORF">HM1_2177</name>
</gene>
<organism>
    <name type="scientific">Heliobacterium modesticaldum (strain ATCC 51547 / Ice1)</name>
    <dbReference type="NCBI Taxonomy" id="498761"/>
    <lineage>
        <taxon>Bacteria</taxon>
        <taxon>Bacillati</taxon>
        <taxon>Bacillota</taxon>
        <taxon>Clostridia</taxon>
        <taxon>Eubacteriales</taxon>
        <taxon>Heliobacteriaceae</taxon>
        <taxon>Heliomicrobium</taxon>
    </lineage>
</organism>
<comment type="function">
    <text evidence="1">Catalyzes the interconversion of methylthioribose-1-phosphate (MTR-1-P) into methylthioribulose-1-phosphate (MTRu-1-P).</text>
</comment>
<comment type="catalytic activity">
    <reaction evidence="1">
        <text>5-(methylsulfanyl)-alpha-D-ribose 1-phosphate = 5-(methylsulfanyl)-D-ribulose 1-phosphate</text>
        <dbReference type="Rhea" id="RHEA:19989"/>
        <dbReference type="ChEBI" id="CHEBI:58533"/>
        <dbReference type="ChEBI" id="CHEBI:58548"/>
        <dbReference type="EC" id="5.3.1.23"/>
    </reaction>
</comment>
<comment type="pathway">
    <text evidence="1">Amino-acid biosynthesis; L-methionine biosynthesis via salvage pathway; L-methionine from S-methyl-5-thio-alpha-D-ribose 1-phosphate: step 1/6.</text>
</comment>
<comment type="similarity">
    <text evidence="2">Belongs to the eIF-2B alpha/beta/delta subunits family. MtnA subfamily.</text>
</comment>
<name>MTNA_HELMI</name>
<keyword id="KW-0028">Amino-acid biosynthesis</keyword>
<keyword id="KW-0413">Isomerase</keyword>
<keyword id="KW-0486">Methionine biosynthesis</keyword>
<keyword id="KW-1185">Reference proteome</keyword>
<proteinExistence type="inferred from homology"/>
<dbReference type="EC" id="5.3.1.23" evidence="1"/>
<dbReference type="EMBL" id="CP000930">
    <property type="protein sequence ID" value="ABZ84733.1"/>
    <property type="molecule type" value="Genomic_DNA"/>
</dbReference>
<dbReference type="RefSeq" id="WP_012283233.1">
    <property type="nucleotide sequence ID" value="NC_010337.2"/>
</dbReference>
<dbReference type="SMR" id="B0TH58"/>
<dbReference type="STRING" id="498761.HM1_2177"/>
<dbReference type="KEGG" id="hmo:HM1_2177"/>
<dbReference type="eggNOG" id="COG0182">
    <property type="taxonomic scope" value="Bacteria"/>
</dbReference>
<dbReference type="HOGENOM" id="CLU_016218_1_2_9"/>
<dbReference type="OrthoDB" id="9803436at2"/>
<dbReference type="UniPathway" id="UPA00904">
    <property type="reaction ID" value="UER00874"/>
</dbReference>
<dbReference type="Proteomes" id="UP000008550">
    <property type="component" value="Chromosome"/>
</dbReference>
<dbReference type="GO" id="GO:0046523">
    <property type="term" value="F:S-methyl-5-thioribose-1-phosphate isomerase activity"/>
    <property type="evidence" value="ECO:0007669"/>
    <property type="project" value="UniProtKB-UniRule"/>
</dbReference>
<dbReference type="GO" id="GO:0019509">
    <property type="term" value="P:L-methionine salvage from methylthioadenosine"/>
    <property type="evidence" value="ECO:0007669"/>
    <property type="project" value="UniProtKB-UniRule"/>
</dbReference>
<dbReference type="FunFam" id="1.20.120.420:FF:000003">
    <property type="entry name" value="Methylthioribose-1-phosphate isomerase"/>
    <property type="match status" value="1"/>
</dbReference>
<dbReference type="FunFam" id="3.40.50.10470:FF:000006">
    <property type="entry name" value="Methylthioribose-1-phosphate isomerase"/>
    <property type="match status" value="1"/>
</dbReference>
<dbReference type="Gene3D" id="1.20.120.420">
    <property type="entry name" value="translation initiation factor eif-2b, domain 1"/>
    <property type="match status" value="1"/>
</dbReference>
<dbReference type="Gene3D" id="3.40.50.10470">
    <property type="entry name" value="Translation initiation factor eif-2b, domain 2"/>
    <property type="match status" value="1"/>
</dbReference>
<dbReference type="HAMAP" id="MF_01678">
    <property type="entry name" value="Salvage_MtnA"/>
    <property type="match status" value="1"/>
</dbReference>
<dbReference type="InterPro" id="IPR000649">
    <property type="entry name" value="IF-2B-related"/>
</dbReference>
<dbReference type="InterPro" id="IPR005251">
    <property type="entry name" value="IF-M1Pi"/>
</dbReference>
<dbReference type="InterPro" id="IPR042529">
    <property type="entry name" value="IF_2B-like_C"/>
</dbReference>
<dbReference type="InterPro" id="IPR011559">
    <property type="entry name" value="Initiation_fac_2B_a/b/d"/>
</dbReference>
<dbReference type="InterPro" id="IPR027363">
    <property type="entry name" value="M1Pi_N"/>
</dbReference>
<dbReference type="InterPro" id="IPR037171">
    <property type="entry name" value="NagB/RpiA_transferase-like"/>
</dbReference>
<dbReference type="NCBIfam" id="TIGR00524">
    <property type="entry name" value="eIF-2B_rel"/>
    <property type="match status" value="1"/>
</dbReference>
<dbReference type="NCBIfam" id="NF004326">
    <property type="entry name" value="PRK05720.1"/>
    <property type="match status" value="1"/>
</dbReference>
<dbReference type="NCBIfam" id="TIGR00512">
    <property type="entry name" value="salvage_mtnA"/>
    <property type="match status" value="1"/>
</dbReference>
<dbReference type="PANTHER" id="PTHR43475">
    <property type="entry name" value="METHYLTHIORIBOSE-1-PHOSPHATE ISOMERASE"/>
    <property type="match status" value="1"/>
</dbReference>
<dbReference type="PANTHER" id="PTHR43475:SF1">
    <property type="entry name" value="METHYLTHIORIBOSE-1-PHOSPHATE ISOMERASE"/>
    <property type="match status" value="1"/>
</dbReference>
<dbReference type="Pfam" id="PF01008">
    <property type="entry name" value="IF-2B"/>
    <property type="match status" value="1"/>
</dbReference>
<dbReference type="SUPFAM" id="SSF100950">
    <property type="entry name" value="NagB/RpiA/CoA transferase-like"/>
    <property type="match status" value="1"/>
</dbReference>
<protein>
    <recommendedName>
        <fullName evidence="1">Methylthioribose-1-phosphate isomerase</fullName>
        <shortName evidence="1">M1Pi</shortName>
        <shortName evidence="1">MTR-1-P isomerase</shortName>
        <ecNumber evidence="1">5.3.1.23</ecNumber>
    </recommendedName>
    <alternativeName>
        <fullName evidence="1">S-methyl-5-thioribose-1-phosphate isomerase</fullName>
    </alternativeName>
</protein>
<reference key="1">
    <citation type="journal article" date="2008" name="J. Bacteriol.">
        <title>The genome of Heliobacterium modesticaldum, a phototrophic representative of the Firmicutes containing the simplest photosynthetic apparatus.</title>
        <authorList>
            <person name="Sattley W.M."/>
            <person name="Madigan M.T."/>
            <person name="Swingley W.D."/>
            <person name="Cheung P.C."/>
            <person name="Clocksin K.M."/>
            <person name="Conrad A.L."/>
            <person name="Dejesa L.C."/>
            <person name="Honchak B.M."/>
            <person name="Jung D.O."/>
            <person name="Karbach L.E."/>
            <person name="Kurdoglu A."/>
            <person name="Lahiri S."/>
            <person name="Mastrian S.D."/>
            <person name="Page L.E."/>
            <person name="Taylor H.L."/>
            <person name="Wang Z.T."/>
            <person name="Raymond J."/>
            <person name="Chen M."/>
            <person name="Blankenship R.E."/>
            <person name="Touchman J.W."/>
        </authorList>
    </citation>
    <scope>NUCLEOTIDE SEQUENCE [LARGE SCALE GENOMIC DNA]</scope>
    <source>
        <strain>ATCC 51547 / Ice1</strain>
    </source>
</reference>